<feature type="chain" id="PRO_1000060921" description="UDP-3-O-acylglucosamine N-acyltransferase">
    <location>
        <begin position="1"/>
        <end position="345"/>
    </location>
</feature>
<feature type="active site" description="Proton acceptor" evidence="1">
    <location>
        <position position="253"/>
    </location>
</feature>
<evidence type="ECO:0000255" key="1">
    <source>
        <dbReference type="HAMAP-Rule" id="MF_00523"/>
    </source>
</evidence>
<keyword id="KW-0012">Acyltransferase</keyword>
<keyword id="KW-0441">Lipid A biosynthesis</keyword>
<keyword id="KW-0444">Lipid biosynthesis</keyword>
<keyword id="KW-0443">Lipid metabolism</keyword>
<keyword id="KW-0677">Repeat</keyword>
<keyword id="KW-0808">Transferase</keyword>
<sequence length="345" mass="36936">MVSSNFYKNLGPRKLTAIIDFLHDIIEPPKIHEDIAIHDIKILQEASPNDISFLSNPKYSEFLKTTKAAACIVPKNFTGEANPNTVLLHTQNSYFAYGKLIDFFYAPIKSYPAKIMKSAIVADSATIGKNCYIGHNVVIEDDVIIGDNSIIEAGSFIGRGVNIGRNARIEQHVSINYTIIGDDVVILAGAKIGQDGFGFSTEKGIHHKIFHIGIVKIGNNVEIGANTTIDRGSLQDTIIKDLCRIDNLVQIGHGVKIGKGSIIIAQTGIAGSSTIGKYCTLGGQVGIAGHLNIGDGAQVAAQGGVAQNIEAGKIVGGSPAVPIMDWHRQSIIMKQLLTSNSKLKK</sequence>
<accession>A8F0C5</accession>
<name>LPXD_RICM5</name>
<proteinExistence type="inferred from homology"/>
<organism>
    <name type="scientific">Rickettsia massiliae (strain Mtu5)</name>
    <dbReference type="NCBI Taxonomy" id="416276"/>
    <lineage>
        <taxon>Bacteria</taxon>
        <taxon>Pseudomonadati</taxon>
        <taxon>Pseudomonadota</taxon>
        <taxon>Alphaproteobacteria</taxon>
        <taxon>Rickettsiales</taxon>
        <taxon>Rickettsiaceae</taxon>
        <taxon>Rickettsieae</taxon>
        <taxon>Rickettsia</taxon>
        <taxon>spotted fever group</taxon>
    </lineage>
</organism>
<gene>
    <name evidence="1" type="primary">lpxD</name>
    <name type="ordered locus">RMA_0008</name>
</gene>
<comment type="function">
    <text evidence="1">Catalyzes the N-acylation of UDP-3-O-acylglucosamine using 3-hydroxyacyl-ACP as the acyl donor. Is involved in the biosynthesis of lipid A, a phosphorylated glycolipid that anchors the lipopolysaccharide to the outer membrane of the cell.</text>
</comment>
<comment type="catalytic activity">
    <reaction evidence="1">
        <text>a UDP-3-O-[(3R)-3-hydroxyacyl]-alpha-D-glucosamine + a (3R)-hydroxyacyl-[ACP] = a UDP-2-N,3-O-bis[(3R)-3-hydroxyacyl]-alpha-D-glucosamine + holo-[ACP] + H(+)</text>
        <dbReference type="Rhea" id="RHEA:53836"/>
        <dbReference type="Rhea" id="RHEA-COMP:9685"/>
        <dbReference type="Rhea" id="RHEA-COMP:9945"/>
        <dbReference type="ChEBI" id="CHEBI:15378"/>
        <dbReference type="ChEBI" id="CHEBI:64479"/>
        <dbReference type="ChEBI" id="CHEBI:78827"/>
        <dbReference type="ChEBI" id="CHEBI:137740"/>
        <dbReference type="ChEBI" id="CHEBI:137748"/>
        <dbReference type="EC" id="2.3.1.191"/>
    </reaction>
</comment>
<comment type="pathway">
    <text evidence="1">Bacterial outer membrane biogenesis; LPS lipid A biosynthesis.</text>
</comment>
<comment type="subunit">
    <text evidence="1">Homotrimer.</text>
</comment>
<comment type="similarity">
    <text evidence="1">Belongs to the transferase hexapeptide repeat family. LpxD subfamily.</text>
</comment>
<protein>
    <recommendedName>
        <fullName evidence="1">UDP-3-O-acylglucosamine N-acyltransferase</fullName>
        <ecNumber evidence="1">2.3.1.191</ecNumber>
    </recommendedName>
</protein>
<dbReference type="EC" id="2.3.1.191" evidence="1"/>
<dbReference type="EMBL" id="CP000683">
    <property type="protein sequence ID" value="ABV84357.1"/>
    <property type="molecule type" value="Genomic_DNA"/>
</dbReference>
<dbReference type="RefSeq" id="WP_012152338.1">
    <property type="nucleotide sequence ID" value="NC_009900.1"/>
</dbReference>
<dbReference type="SMR" id="A8F0C5"/>
<dbReference type="KEGG" id="rms:RMA_0008"/>
<dbReference type="HOGENOM" id="CLU_049865_0_0_5"/>
<dbReference type="UniPathway" id="UPA00973"/>
<dbReference type="Proteomes" id="UP000001311">
    <property type="component" value="Chromosome"/>
</dbReference>
<dbReference type="GO" id="GO:0016020">
    <property type="term" value="C:membrane"/>
    <property type="evidence" value="ECO:0007669"/>
    <property type="project" value="GOC"/>
</dbReference>
<dbReference type="GO" id="GO:0016410">
    <property type="term" value="F:N-acyltransferase activity"/>
    <property type="evidence" value="ECO:0007669"/>
    <property type="project" value="InterPro"/>
</dbReference>
<dbReference type="GO" id="GO:0009245">
    <property type="term" value="P:lipid A biosynthetic process"/>
    <property type="evidence" value="ECO:0007669"/>
    <property type="project" value="UniProtKB-UniRule"/>
</dbReference>
<dbReference type="CDD" id="cd03352">
    <property type="entry name" value="LbH_LpxD"/>
    <property type="match status" value="1"/>
</dbReference>
<dbReference type="Gene3D" id="2.160.10.10">
    <property type="entry name" value="Hexapeptide repeat proteins"/>
    <property type="match status" value="1"/>
</dbReference>
<dbReference type="Gene3D" id="3.40.1390.10">
    <property type="entry name" value="MurE/MurF, N-terminal domain"/>
    <property type="match status" value="1"/>
</dbReference>
<dbReference type="HAMAP" id="MF_00523">
    <property type="entry name" value="LpxD"/>
    <property type="match status" value="1"/>
</dbReference>
<dbReference type="InterPro" id="IPR001451">
    <property type="entry name" value="Hexapep"/>
</dbReference>
<dbReference type="InterPro" id="IPR018357">
    <property type="entry name" value="Hexapep_transf_CS"/>
</dbReference>
<dbReference type="InterPro" id="IPR007691">
    <property type="entry name" value="LpxD"/>
</dbReference>
<dbReference type="InterPro" id="IPR011004">
    <property type="entry name" value="Trimer_LpxA-like_sf"/>
</dbReference>
<dbReference type="InterPro" id="IPR020573">
    <property type="entry name" value="UDP_GlcNAc_AcTrfase_non-rep"/>
</dbReference>
<dbReference type="NCBIfam" id="TIGR01853">
    <property type="entry name" value="lipid_A_lpxD"/>
    <property type="match status" value="1"/>
</dbReference>
<dbReference type="NCBIfam" id="NF002060">
    <property type="entry name" value="PRK00892.1"/>
    <property type="match status" value="1"/>
</dbReference>
<dbReference type="PANTHER" id="PTHR43378">
    <property type="entry name" value="UDP-3-O-ACYLGLUCOSAMINE N-ACYLTRANSFERASE"/>
    <property type="match status" value="1"/>
</dbReference>
<dbReference type="PANTHER" id="PTHR43378:SF2">
    <property type="entry name" value="UDP-3-O-ACYLGLUCOSAMINE N-ACYLTRANSFERASE 1, MITOCHONDRIAL-RELATED"/>
    <property type="match status" value="1"/>
</dbReference>
<dbReference type="Pfam" id="PF00132">
    <property type="entry name" value="Hexapep"/>
    <property type="match status" value="1"/>
</dbReference>
<dbReference type="Pfam" id="PF04613">
    <property type="entry name" value="LpxD"/>
    <property type="match status" value="1"/>
</dbReference>
<dbReference type="SUPFAM" id="SSF51161">
    <property type="entry name" value="Trimeric LpxA-like enzymes"/>
    <property type="match status" value="1"/>
</dbReference>
<dbReference type="PROSITE" id="PS00101">
    <property type="entry name" value="HEXAPEP_TRANSFERASES"/>
    <property type="match status" value="2"/>
</dbReference>
<reference key="1">
    <citation type="journal article" date="2007" name="Genome Res.">
        <title>Lateral gene transfer between obligate intracellular bacteria: evidence from the Rickettsia massiliae genome.</title>
        <authorList>
            <person name="Blanc G."/>
            <person name="Ogata H."/>
            <person name="Robert C."/>
            <person name="Audic S."/>
            <person name="Claverie J.-M."/>
            <person name="Raoult D."/>
        </authorList>
    </citation>
    <scope>NUCLEOTIDE SEQUENCE [LARGE SCALE GENOMIC DNA]</scope>
    <source>
        <strain>Mtu5</strain>
    </source>
</reference>